<comment type="function">
    <text evidence="1">Catalyzes the transfer of an acyl group from acyl-phosphate (acyl-PO(4)) to glycerol-3-phosphate (G3P) to form lysophosphatidic acid (LPA). This enzyme utilizes acyl-phosphate as fatty acyl donor, but not acyl-CoA or acyl-ACP.</text>
</comment>
<comment type="catalytic activity">
    <reaction evidence="1">
        <text>an acyl phosphate + sn-glycerol 3-phosphate = a 1-acyl-sn-glycero-3-phosphate + phosphate</text>
        <dbReference type="Rhea" id="RHEA:34075"/>
        <dbReference type="ChEBI" id="CHEBI:43474"/>
        <dbReference type="ChEBI" id="CHEBI:57597"/>
        <dbReference type="ChEBI" id="CHEBI:57970"/>
        <dbReference type="ChEBI" id="CHEBI:59918"/>
        <dbReference type="EC" id="2.3.1.275"/>
    </reaction>
</comment>
<comment type="pathway">
    <text evidence="1">Lipid metabolism; phospholipid metabolism.</text>
</comment>
<comment type="subunit">
    <text evidence="1">Probably interacts with PlsX.</text>
</comment>
<comment type="subcellular location">
    <subcellularLocation>
        <location evidence="1">Cell membrane</location>
        <topology evidence="1">Multi-pass membrane protein</topology>
    </subcellularLocation>
</comment>
<comment type="similarity">
    <text evidence="1">Belongs to the PlsY family.</text>
</comment>
<feature type="chain" id="PRO_0000188315" description="Glycerol-3-phosphate acyltransferase 2">
    <location>
        <begin position="1"/>
        <end position="190"/>
    </location>
</feature>
<feature type="transmembrane region" description="Helical" evidence="1">
    <location>
        <begin position="1"/>
        <end position="21"/>
    </location>
</feature>
<feature type="transmembrane region" description="Helical" evidence="1">
    <location>
        <begin position="53"/>
        <end position="73"/>
    </location>
</feature>
<feature type="transmembrane region" description="Helical" evidence="1">
    <location>
        <begin position="76"/>
        <end position="96"/>
    </location>
</feature>
<feature type="transmembrane region" description="Helical" evidence="1">
    <location>
        <begin position="110"/>
        <end position="130"/>
    </location>
</feature>
<feature type="transmembrane region" description="Helical" evidence="1">
    <location>
        <begin position="152"/>
        <end position="172"/>
    </location>
</feature>
<sequence>MNILTLILSYLIGSISFALIVGKMFYKKDIRDYGSGNLGATNAYRVLGIKAGVIVAIADILKGTFACLLPLILSSTINPIVCGLLAILGHIFSVFASFKGGKAVATATGVFLFLSPLGVLVGFVVFVLTLLFTKYVSLSSMLAGIALFIYSLIFEDKVIIALSLLIIVSIIILHRQNIKRILNGTENKIV</sequence>
<protein>
    <recommendedName>
        <fullName evidence="1">Glycerol-3-phosphate acyltransferase 2</fullName>
    </recommendedName>
    <alternativeName>
        <fullName evidence="1">Acyl-PO4 G3P acyltransferase 2</fullName>
    </alternativeName>
    <alternativeName>
        <fullName evidence="1">Acyl-phosphate--glycerol-3-phosphate acyltransferase 2</fullName>
    </alternativeName>
    <alternativeName>
        <fullName evidence="1">G3P acyltransferase 2</fullName>
        <shortName evidence="1">GPAT 2</shortName>
        <ecNumber evidence="1">2.3.1.275</ecNumber>
    </alternativeName>
    <alternativeName>
        <fullName evidence="1">Lysophosphatidic acid synthase 2</fullName>
        <shortName evidence="1">LPA synthase 2</shortName>
    </alternativeName>
</protein>
<organism>
    <name type="scientific">Bacillus anthracis</name>
    <dbReference type="NCBI Taxonomy" id="1392"/>
    <lineage>
        <taxon>Bacteria</taxon>
        <taxon>Bacillati</taxon>
        <taxon>Bacillota</taxon>
        <taxon>Bacilli</taxon>
        <taxon>Bacillales</taxon>
        <taxon>Bacillaceae</taxon>
        <taxon>Bacillus</taxon>
        <taxon>Bacillus cereus group</taxon>
    </lineage>
</organism>
<reference key="1">
    <citation type="journal article" date="2003" name="Nature">
        <title>The genome sequence of Bacillus anthracis Ames and comparison to closely related bacteria.</title>
        <authorList>
            <person name="Read T.D."/>
            <person name="Peterson S.N."/>
            <person name="Tourasse N.J."/>
            <person name="Baillie L.W."/>
            <person name="Paulsen I.T."/>
            <person name="Nelson K.E."/>
            <person name="Tettelin H."/>
            <person name="Fouts D.E."/>
            <person name="Eisen J.A."/>
            <person name="Gill S.R."/>
            <person name="Holtzapple E.K."/>
            <person name="Okstad O.A."/>
            <person name="Helgason E."/>
            <person name="Rilstone J."/>
            <person name="Wu M."/>
            <person name="Kolonay J.F."/>
            <person name="Beanan M.J."/>
            <person name="Dodson R.J."/>
            <person name="Brinkac L.M."/>
            <person name="Gwinn M.L."/>
            <person name="DeBoy R.T."/>
            <person name="Madpu R."/>
            <person name="Daugherty S.C."/>
            <person name="Durkin A.S."/>
            <person name="Haft D.H."/>
            <person name="Nelson W.C."/>
            <person name="Peterson J.D."/>
            <person name="Pop M."/>
            <person name="Khouri H.M."/>
            <person name="Radune D."/>
            <person name="Benton J.L."/>
            <person name="Mahamoud Y."/>
            <person name="Jiang L."/>
            <person name="Hance I.R."/>
            <person name="Weidman J.F."/>
            <person name="Berry K.J."/>
            <person name="Plaut R.D."/>
            <person name="Wolf A.M."/>
            <person name="Watkins K.L."/>
            <person name="Nierman W.C."/>
            <person name="Hazen A."/>
            <person name="Cline R.T."/>
            <person name="Redmond C."/>
            <person name="Thwaite J.E."/>
            <person name="White O."/>
            <person name="Salzberg S.L."/>
            <person name="Thomason B."/>
            <person name="Friedlander A.M."/>
            <person name="Koehler T.M."/>
            <person name="Hanna P.C."/>
            <person name="Kolstoe A.-B."/>
            <person name="Fraser C.M."/>
        </authorList>
    </citation>
    <scope>NUCLEOTIDE SEQUENCE [LARGE SCALE GENOMIC DNA]</scope>
    <source>
        <strain>Ames / isolate Porton</strain>
    </source>
</reference>
<reference key="2">
    <citation type="journal article" date="2009" name="J. Bacteriol.">
        <title>The complete genome sequence of Bacillus anthracis Ames 'Ancestor'.</title>
        <authorList>
            <person name="Ravel J."/>
            <person name="Jiang L."/>
            <person name="Stanley S.T."/>
            <person name="Wilson M.R."/>
            <person name="Decker R.S."/>
            <person name="Read T.D."/>
            <person name="Worsham P."/>
            <person name="Keim P.S."/>
            <person name="Salzberg S.L."/>
            <person name="Fraser-Liggett C.M."/>
            <person name="Rasko D.A."/>
        </authorList>
    </citation>
    <scope>NUCLEOTIDE SEQUENCE [LARGE SCALE GENOMIC DNA]</scope>
    <source>
        <strain>Ames ancestor</strain>
    </source>
</reference>
<reference key="3">
    <citation type="submission" date="2004-01" db="EMBL/GenBank/DDBJ databases">
        <title>Complete genome sequence of Bacillus anthracis Sterne.</title>
        <authorList>
            <person name="Brettin T.S."/>
            <person name="Bruce D."/>
            <person name="Challacombe J.F."/>
            <person name="Gilna P."/>
            <person name="Han C."/>
            <person name="Hill K."/>
            <person name="Hitchcock P."/>
            <person name="Jackson P."/>
            <person name="Keim P."/>
            <person name="Longmire J."/>
            <person name="Lucas S."/>
            <person name="Okinaka R."/>
            <person name="Richardson P."/>
            <person name="Rubin E."/>
            <person name="Tice H."/>
        </authorList>
    </citation>
    <scope>NUCLEOTIDE SEQUENCE [LARGE SCALE GENOMIC DNA]</scope>
    <source>
        <strain>Sterne</strain>
    </source>
</reference>
<proteinExistence type="inferred from homology"/>
<accession>Q81N43</accession>
<accession>Q6HWA3</accession>
<accession>Q6KQF4</accession>
<dbReference type="EC" id="2.3.1.275" evidence="1"/>
<dbReference type="EMBL" id="AE016879">
    <property type="protein sequence ID" value="AAP27146.1"/>
    <property type="molecule type" value="Genomic_DNA"/>
</dbReference>
<dbReference type="EMBL" id="AE017334">
    <property type="protein sequence ID" value="AAT32482.1"/>
    <property type="molecule type" value="Genomic_DNA"/>
</dbReference>
<dbReference type="EMBL" id="AE017225">
    <property type="protein sequence ID" value="AAT55436.1"/>
    <property type="molecule type" value="Genomic_DNA"/>
</dbReference>
<dbReference type="RefSeq" id="NP_845660.1">
    <property type="nucleotide sequence ID" value="NC_003997.3"/>
</dbReference>
<dbReference type="RefSeq" id="YP_029385.1">
    <property type="nucleotide sequence ID" value="NC_005945.1"/>
</dbReference>
<dbReference type="SMR" id="Q81N43"/>
<dbReference type="STRING" id="261594.GBAA_3374"/>
<dbReference type="DNASU" id="1084765"/>
<dbReference type="GeneID" id="45023130"/>
<dbReference type="KEGG" id="ban:BA_3374"/>
<dbReference type="KEGG" id="banh:HYU01_16550"/>
<dbReference type="KEGG" id="bar:GBAA_3374"/>
<dbReference type="KEGG" id="bat:BAS3128"/>
<dbReference type="PATRIC" id="fig|198094.11.peg.3349"/>
<dbReference type="eggNOG" id="COG0344">
    <property type="taxonomic scope" value="Bacteria"/>
</dbReference>
<dbReference type="HOGENOM" id="CLU_081254_4_0_9"/>
<dbReference type="OMA" id="WWSHRAN"/>
<dbReference type="OrthoDB" id="9777124at2"/>
<dbReference type="UniPathway" id="UPA00085"/>
<dbReference type="Proteomes" id="UP000000427">
    <property type="component" value="Chromosome"/>
</dbReference>
<dbReference type="Proteomes" id="UP000000594">
    <property type="component" value="Chromosome"/>
</dbReference>
<dbReference type="GO" id="GO:0005886">
    <property type="term" value="C:plasma membrane"/>
    <property type="evidence" value="ECO:0007669"/>
    <property type="project" value="UniProtKB-SubCell"/>
</dbReference>
<dbReference type="GO" id="GO:0043772">
    <property type="term" value="F:acyl-phosphate glycerol-3-phosphate acyltransferase activity"/>
    <property type="evidence" value="ECO:0007669"/>
    <property type="project" value="UniProtKB-UniRule"/>
</dbReference>
<dbReference type="GO" id="GO:0008654">
    <property type="term" value="P:phospholipid biosynthetic process"/>
    <property type="evidence" value="ECO:0007669"/>
    <property type="project" value="UniProtKB-UniRule"/>
</dbReference>
<dbReference type="HAMAP" id="MF_01043">
    <property type="entry name" value="PlsY"/>
    <property type="match status" value="1"/>
</dbReference>
<dbReference type="InterPro" id="IPR003811">
    <property type="entry name" value="G3P_acylTferase_PlsY"/>
</dbReference>
<dbReference type="NCBIfam" id="TIGR00023">
    <property type="entry name" value="glycerol-3-phosphate 1-O-acyltransferase PlsY"/>
    <property type="match status" value="1"/>
</dbReference>
<dbReference type="PANTHER" id="PTHR30309:SF0">
    <property type="entry name" value="GLYCEROL-3-PHOSPHATE ACYLTRANSFERASE-RELATED"/>
    <property type="match status" value="1"/>
</dbReference>
<dbReference type="PANTHER" id="PTHR30309">
    <property type="entry name" value="INNER MEMBRANE PROTEIN YGIH"/>
    <property type="match status" value="1"/>
</dbReference>
<dbReference type="Pfam" id="PF02660">
    <property type="entry name" value="G3P_acyltransf"/>
    <property type="match status" value="1"/>
</dbReference>
<dbReference type="SMART" id="SM01207">
    <property type="entry name" value="G3P_acyltransf"/>
    <property type="match status" value="1"/>
</dbReference>
<evidence type="ECO:0000255" key="1">
    <source>
        <dbReference type="HAMAP-Rule" id="MF_01043"/>
    </source>
</evidence>
<gene>
    <name evidence="1" type="primary">plsY2</name>
    <name type="ordered locus">BA_3374</name>
    <name type="ordered locus">GBAA_3374</name>
    <name type="ordered locus">BAS3128</name>
</gene>
<name>PLSY2_BACAN</name>
<keyword id="KW-1003">Cell membrane</keyword>
<keyword id="KW-0444">Lipid biosynthesis</keyword>
<keyword id="KW-0443">Lipid metabolism</keyword>
<keyword id="KW-0472">Membrane</keyword>
<keyword id="KW-0594">Phospholipid biosynthesis</keyword>
<keyword id="KW-1208">Phospholipid metabolism</keyword>
<keyword id="KW-1185">Reference proteome</keyword>
<keyword id="KW-0808">Transferase</keyword>
<keyword id="KW-0812">Transmembrane</keyword>
<keyword id="KW-1133">Transmembrane helix</keyword>